<proteinExistence type="inferred from homology"/>
<accession>A1JPM8</accession>
<keyword id="KW-0963">Cytoplasm</keyword>
<keyword id="KW-0290">Folate-binding</keyword>
<keyword id="KW-0819">tRNA processing</keyword>
<sequence>MANNTPFAAQPLLTSSELPLTLISLDDWALVTLTGADRVKYLQGQVTADIDALPTDQHVLCAHCDAKGKMWSNLRLFYRGEGLAFIERRSVLDNQLSELKKYAVFSKVVIAAQPDAVLLGVAGTQAKAVLAEVFAELPNADHPVVQQGDSTLLYFSLPAERFLLVTDTEQAQQLVEKLADRAQFNNSKQWLALDIEAGFPIIDTDSSAQFIPQATNIQALNGISFSKGCYTGQEMVARAKYRGANKRALYWLAGSANRAPAVGEDLEWQLGENWRRTGSVLAAITLSDGTVWVQAVLNNDLAADSVLRVRDDAESVLTIQPLPYSLTEDK</sequence>
<name>YGFZ_YERE8</name>
<gene>
    <name type="ordered locus">YE3387</name>
</gene>
<protein>
    <recommendedName>
        <fullName evidence="1">tRNA-modifying protein YgfZ</fullName>
    </recommendedName>
</protein>
<organism>
    <name type="scientific">Yersinia enterocolitica serotype O:8 / biotype 1B (strain NCTC 13174 / 8081)</name>
    <dbReference type="NCBI Taxonomy" id="393305"/>
    <lineage>
        <taxon>Bacteria</taxon>
        <taxon>Pseudomonadati</taxon>
        <taxon>Pseudomonadota</taxon>
        <taxon>Gammaproteobacteria</taxon>
        <taxon>Enterobacterales</taxon>
        <taxon>Yersiniaceae</taxon>
        <taxon>Yersinia</taxon>
    </lineage>
</organism>
<dbReference type="EMBL" id="AM286415">
    <property type="protein sequence ID" value="CAL13413.1"/>
    <property type="molecule type" value="Genomic_DNA"/>
</dbReference>
<dbReference type="RefSeq" id="WP_011817025.1">
    <property type="nucleotide sequence ID" value="NC_008800.1"/>
</dbReference>
<dbReference type="RefSeq" id="YP_001007556.1">
    <property type="nucleotide sequence ID" value="NC_008800.1"/>
</dbReference>
<dbReference type="SMR" id="A1JPM8"/>
<dbReference type="KEGG" id="yen:YE3387"/>
<dbReference type="PATRIC" id="fig|393305.7.peg.3595"/>
<dbReference type="eggNOG" id="COG0354">
    <property type="taxonomic scope" value="Bacteria"/>
</dbReference>
<dbReference type="HOGENOM" id="CLU_007884_6_1_6"/>
<dbReference type="OrthoDB" id="9796287at2"/>
<dbReference type="Proteomes" id="UP000000642">
    <property type="component" value="Chromosome"/>
</dbReference>
<dbReference type="GO" id="GO:0005737">
    <property type="term" value="C:cytoplasm"/>
    <property type="evidence" value="ECO:0007669"/>
    <property type="project" value="UniProtKB-SubCell"/>
</dbReference>
<dbReference type="GO" id="GO:0005542">
    <property type="term" value="F:folic acid binding"/>
    <property type="evidence" value="ECO:0007669"/>
    <property type="project" value="UniProtKB-UniRule"/>
</dbReference>
<dbReference type="GO" id="GO:0016226">
    <property type="term" value="P:iron-sulfur cluster assembly"/>
    <property type="evidence" value="ECO:0007669"/>
    <property type="project" value="TreeGrafter"/>
</dbReference>
<dbReference type="GO" id="GO:0009451">
    <property type="term" value="P:RNA modification"/>
    <property type="evidence" value="ECO:0007669"/>
    <property type="project" value="InterPro"/>
</dbReference>
<dbReference type="GO" id="GO:0008033">
    <property type="term" value="P:tRNA processing"/>
    <property type="evidence" value="ECO:0007669"/>
    <property type="project" value="UniProtKB-UniRule"/>
</dbReference>
<dbReference type="FunFam" id="2.40.30.160:FF:000001">
    <property type="entry name" value="tRNA-modifying protein YgfZ"/>
    <property type="match status" value="1"/>
</dbReference>
<dbReference type="FunFam" id="3.30.70.1400:FF:000002">
    <property type="entry name" value="tRNA-modifying protein YgfZ"/>
    <property type="match status" value="1"/>
</dbReference>
<dbReference type="FunFam" id="3.30.70.1630:FF:000001">
    <property type="entry name" value="tRNA-modifying protein YgfZ"/>
    <property type="match status" value="1"/>
</dbReference>
<dbReference type="Gene3D" id="2.40.30.160">
    <property type="match status" value="1"/>
</dbReference>
<dbReference type="Gene3D" id="3.30.70.1630">
    <property type="match status" value="1"/>
</dbReference>
<dbReference type="Gene3D" id="3.30.70.1400">
    <property type="entry name" value="Aminomethyltransferase beta-barrel domains"/>
    <property type="match status" value="1"/>
</dbReference>
<dbReference type="HAMAP" id="MF_01175">
    <property type="entry name" value="tRNA_modifying_YgfZ"/>
    <property type="match status" value="1"/>
</dbReference>
<dbReference type="InterPro" id="IPR006222">
    <property type="entry name" value="GCV_T_N"/>
</dbReference>
<dbReference type="InterPro" id="IPR029043">
    <property type="entry name" value="GcvT/YgfZ_C"/>
</dbReference>
<dbReference type="InterPro" id="IPR023758">
    <property type="entry name" value="tRNA-modifying_YgfZ"/>
</dbReference>
<dbReference type="InterPro" id="IPR045179">
    <property type="entry name" value="YgfZ/GcvT"/>
</dbReference>
<dbReference type="InterPro" id="IPR017703">
    <property type="entry name" value="YgfZ/GcvT_CS"/>
</dbReference>
<dbReference type="InterPro" id="IPR048451">
    <property type="entry name" value="YgfZ_barrel"/>
</dbReference>
<dbReference type="NCBIfam" id="NF007110">
    <property type="entry name" value="PRK09559.1"/>
    <property type="match status" value="1"/>
</dbReference>
<dbReference type="NCBIfam" id="TIGR03317">
    <property type="entry name" value="ygfZ_signature"/>
    <property type="match status" value="1"/>
</dbReference>
<dbReference type="PANTHER" id="PTHR22602">
    <property type="entry name" value="TRANSFERASE CAF17, MITOCHONDRIAL-RELATED"/>
    <property type="match status" value="1"/>
</dbReference>
<dbReference type="PANTHER" id="PTHR22602:SF0">
    <property type="entry name" value="TRANSFERASE CAF17, MITOCHONDRIAL-RELATED"/>
    <property type="match status" value="1"/>
</dbReference>
<dbReference type="Pfam" id="PF01571">
    <property type="entry name" value="GCV_T"/>
    <property type="match status" value="1"/>
</dbReference>
<dbReference type="Pfam" id="PF21130">
    <property type="entry name" value="YgfZ_barrel"/>
    <property type="match status" value="1"/>
</dbReference>
<dbReference type="SUPFAM" id="SSF101790">
    <property type="entry name" value="Aminomethyltransferase beta-barrel domain"/>
    <property type="match status" value="1"/>
</dbReference>
<dbReference type="SUPFAM" id="SSF103025">
    <property type="entry name" value="Folate-binding domain"/>
    <property type="match status" value="1"/>
</dbReference>
<evidence type="ECO:0000255" key="1">
    <source>
        <dbReference type="HAMAP-Rule" id="MF_01175"/>
    </source>
</evidence>
<reference key="1">
    <citation type="journal article" date="2006" name="PLoS Genet.">
        <title>The complete genome sequence and comparative genome analysis of the high pathogenicity Yersinia enterocolitica strain 8081.</title>
        <authorList>
            <person name="Thomson N.R."/>
            <person name="Howard S."/>
            <person name="Wren B.W."/>
            <person name="Holden M.T.G."/>
            <person name="Crossman L."/>
            <person name="Challis G.L."/>
            <person name="Churcher C."/>
            <person name="Mungall K."/>
            <person name="Brooks K."/>
            <person name="Chillingworth T."/>
            <person name="Feltwell T."/>
            <person name="Abdellah Z."/>
            <person name="Hauser H."/>
            <person name="Jagels K."/>
            <person name="Maddison M."/>
            <person name="Moule S."/>
            <person name="Sanders M."/>
            <person name="Whitehead S."/>
            <person name="Quail M.A."/>
            <person name="Dougan G."/>
            <person name="Parkhill J."/>
            <person name="Prentice M.B."/>
        </authorList>
    </citation>
    <scope>NUCLEOTIDE SEQUENCE [LARGE SCALE GENOMIC DNA]</scope>
    <source>
        <strain>NCTC 13174 / 8081</strain>
    </source>
</reference>
<comment type="function">
    <text evidence="1">Folate-binding protein involved in regulating the level of ATP-DnaA and in the modification of some tRNAs. It is probably a key factor in regulatory networks that act via tRNA modification, such as initiation of chromosomal replication.</text>
</comment>
<comment type="subcellular location">
    <subcellularLocation>
        <location evidence="1">Cytoplasm</location>
    </subcellularLocation>
</comment>
<comment type="similarity">
    <text evidence="1">Belongs to the tRNA-modifying YgfZ family.</text>
</comment>
<feature type="chain" id="PRO_1000065780" description="tRNA-modifying protein YgfZ">
    <location>
        <begin position="1"/>
        <end position="330"/>
    </location>
</feature>
<feature type="binding site" evidence="1">
    <location>
        <position position="28"/>
    </location>
    <ligand>
        <name>folate</name>
        <dbReference type="ChEBI" id="CHEBI:62501"/>
    </ligand>
</feature>
<feature type="binding site" evidence="1">
    <location>
        <position position="190"/>
    </location>
    <ligand>
        <name>folate</name>
        <dbReference type="ChEBI" id="CHEBI:62501"/>
    </ligand>
</feature>